<name>NAC54_ORYSJ</name>
<dbReference type="EMBL" id="AB265821">
    <property type="protein sequence ID" value="BAH03170.1"/>
    <property type="molecule type" value="mRNA"/>
</dbReference>
<dbReference type="EMBL" id="AC118980">
    <property type="protein sequence ID" value="AAO15294.1"/>
    <property type="molecule type" value="Genomic_DNA"/>
</dbReference>
<dbReference type="EMBL" id="DP000009">
    <property type="protein sequence ID" value="ABF93685.1"/>
    <property type="molecule type" value="Genomic_DNA"/>
</dbReference>
<dbReference type="EMBL" id="AP008209">
    <property type="protein sequence ID" value="BAH91969.1"/>
    <property type="molecule type" value="Genomic_DNA"/>
</dbReference>
<dbReference type="EMBL" id="AP014959">
    <property type="protein sequence ID" value="BAS82017.1"/>
    <property type="molecule type" value="Genomic_DNA"/>
</dbReference>
<dbReference type="EMBL" id="CM000140">
    <property type="protein sequence ID" value="EAZ25383.1"/>
    <property type="molecule type" value="Genomic_DNA"/>
</dbReference>
<dbReference type="RefSeq" id="XP_015628513.1">
    <property type="nucleotide sequence ID" value="XM_015773027.1"/>
</dbReference>
<dbReference type="RefSeq" id="XP_015628514.1">
    <property type="nucleotide sequence ID" value="XM_015773028.1"/>
</dbReference>
<dbReference type="RefSeq" id="XP_015628515.1">
    <property type="nucleotide sequence ID" value="XM_015773029.1"/>
</dbReference>
<dbReference type="RefSeq" id="XP_015628516.1">
    <property type="nucleotide sequence ID" value="XM_015773030.1"/>
</dbReference>
<dbReference type="RefSeq" id="XP_015628517.1">
    <property type="nucleotide sequence ID" value="XM_015773031.1"/>
</dbReference>
<dbReference type="RefSeq" id="XP_015628518.1">
    <property type="nucleotide sequence ID" value="XM_015773032.1"/>
</dbReference>
<dbReference type="RefSeq" id="XP_015628519.1">
    <property type="nucleotide sequence ID" value="XM_015773033.1"/>
</dbReference>
<dbReference type="RefSeq" id="XP_015628520.1">
    <property type="nucleotide sequence ID" value="XM_015773034.1"/>
</dbReference>
<dbReference type="RefSeq" id="XP_015628521.1">
    <property type="nucleotide sequence ID" value="XM_015773035.1"/>
</dbReference>
<dbReference type="SMR" id="Q8H045"/>
<dbReference type="FunCoup" id="Q8H045">
    <property type="interactions" value="1219"/>
</dbReference>
<dbReference type="PaxDb" id="39947-Q8H045"/>
<dbReference type="EnsemblPlants" id="Os03t0119966-01">
    <property type="protein sequence ID" value="Os03t0119966-01"/>
    <property type="gene ID" value="Os03g0119966"/>
</dbReference>
<dbReference type="Gramene" id="Os03t0119966-01">
    <property type="protein sequence ID" value="Os03t0119966-01"/>
    <property type="gene ID" value="Os03g0119966"/>
</dbReference>
<dbReference type="KEGG" id="dosa:Os03g0119966"/>
<dbReference type="eggNOG" id="ENOG502QV39">
    <property type="taxonomic scope" value="Eukaryota"/>
</dbReference>
<dbReference type="HOGENOM" id="CLU_024022_0_1_1"/>
<dbReference type="InParanoid" id="Q8H045"/>
<dbReference type="OMA" id="TDSHEHQ"/>
<dbReference type="OrthoDB" id="1860415at2759"/>
<dbReference type="Proteomes" id="UP000000763">
    <property type="component" value="Chromosome 3"/>
</dbReference>
<dbReference type="Proteomes" id="UP000007752">
    <property type="component" value="Chromosome 3"/>
</dbReference>
<dbReference type="Proteomes" id="UP000059680">
    <property type="component" value="Chromosome 3"/>
</dbReference>
<dbReference type="GO" id="GO:0005634">
    <property type="term" value="C:nucleus"/>
    <property type="evidence" value="ECO:0007669"/>
    <property type="project" value="UniProtKB-SubCell"/>
</dbReference>
<dbReference type="GO" id="GO:0003677">
    <property type="term" value="F:DNA binding"/>
    <property type="evidence" value="ECO:0007669"/>
    <property type="project" value="UniProtKB-KW"/>
</dbReference>
<dbReference type="GO" id="GO:0009738">
    <property type="term" value="P:abscisic acid-activated signaling pathway"/>
    <property type="evidence" value="ECO:0007669"/>
    <property type="project" value="UniProtKB-KW"/>
</dbReference>
<dbReference type="GO" id="GO:0006355">
    <property type="term" value="P:regulation of DNA-templated transcription"/>
    <property type="evidence" value="ECO:0007669"/>
    <property type="project" value="InterPro"/>
</dbReference>
<dbReference type="FunFam" id="2.170.150.80:FF:000002">
    <property type="entry name" value="Nac domain-containing protein 86"/>
    <property type="match status" value="1"/>
</dbReference>
<dbReference type="Gene3D" id="2.170.150.80">
    <property type="entry name" value="NAC domain"/>
    <property type="match status" value="1"/>
</dbReference>
<dbReference type="InterPro" id="IPR003441">
    <property type="entry name" value="NAC-dom"/>
</dbReference>
<dbReference type="InterPro" id="IPR036093">
    <property type="entry name" value="NAC_dom_sf"/>
</dbReference>
<dbReference type="PANTHER" id="PTHR31744:SF210">
    <property type="entry name" value="NAC DOMAIN-CONTAINING PROTEIN 86-LIKE"/>
    <property type="match status" value="1"/>
</dbReference>
<dbReference type="PANTHER" id="PTHR31744">
    <property type="entry name" value="PROTEIN CUP-SHAPED COTYLEDON 2-RELATED"/>
    <property type="match status" value="1"/>
</dbReference>
<dbReference type="Pfam" id="PF02365">
    <property type="entry name" value="NAM"/>
    <property type="match status" value="1"/>
</dbReference>
<dbReference type="SUPFAM" id="SSF101941">
    <property type="entry name" value="NAC domain"/>
    <property type="match status" value="1"/>
</dbReference>
<dbReference type="PROSITE" id="PS51005">
    <property type="entry name" value="NAC"/>
    <property type="match status" value="1"/>
</dbReference>
<comment type="function">
    <text evidence="2 3 4">Transcription factor that functions as a regulator of the jasmonate (JA) signaling pathway (PubMed:20015061). May regulate the expression of genes encoding JA biosynthetic enzymes, such as lipoxygenase 7 (CM-LOX1), allene oxide synthase 2 (AOS2) and OPDA reductase 7 (OPR7) (PubMed:20015061). Involved in abscisic acid-induced leaf senescence (PubMed:31911455). Activates the abscisic acid (ABA) signaling-associated gene ABI5 and the senescence-associated gene NYC1 by directly binding to the mitochondrial dysfunction motif (MDM) present in their promoters (PubMed:31911455). Possesses transcriptional activator activity in yeast (PubMed:18980655). Required for the multiplication of the rice dwarf virus (RDV) (PubMed:18980655).</text>
</comment>
<comment type="subcellular location">
    <subcellularLocation>
        <location evidence="1 4">Nucleus</location>
    </subcellularLocation>
    <text evidence="4">Nuclear import of NAC54 requires cleavage of the putative C-terminal transmembrane domain.</text>
</comment>
<comment type="tissue specificity">
    <text evidence="2">Expressed in leaves, roots and flowers.</text>
</comment>
<comment type="domain">
    <text evidence="1">The NAC domain includes a DNA binding domain and a dimerization domain.</text>
</comment>
<comment type="disruption phenotype">
    <text evidence="2 3 4">No visible phenotype under normal growth conditions, but mutant plants show a loss of susceptibility to rice dwarf virus (RDV) (PubMed:18980655). Plants carrying rim1 mutations show a phenotype of root growth inhibition, semi-dwarf phenotype with short roots, and sometimes twisted leaf tips (PubMed:20015061). Mutant plants maintain green leaves at the age of senescence (PubMed:31911455).</text>
</comment>
<comment type="miscellaneous">
    <text evidence="3 4">Under exposure to jasmonate (JA), NAC54 is degraded via the 26S proteasome-dependent pathway (PubMed:20015061). Plants overexpressing NAC54 show early leaf yellowing under dark- and abscisic acid-induced senescence conditions (PubMed:31911455).</text>
</comment>
<accession>Q8H045</accession>
<accession>A3ADJ4</accession>
<sequence>MAPVSLPPGFRFHPTDEELIIYYLKRKINGRQIELEIIPEVDLYKCEPWDLPEKSFLPSKDLEWYFFSPRDRKYPNGSRTNRATKAGYWKATGKDRKVNSQRRAVGMKKTLVYYRGRAPHGSRTDWVMHEYRLDERECETDTGLQDAYALCRVFKKTAPGPKIIEHYGVVHHHVEQPQWMTSSIDRSPTLDVSCDGRGDDFESSSFSFPTETPMDSMHGGFGMQMSAPHEDGKWMQFLSEDAFNATNPFLTNPVSANFSCLPSKVDVALECARLQHRLTLPPLEVEDFPQDVSLDTKIGILRSNPNEVDILQEFLSVATASQELINGSTSSYPEMWLGASTSSASYVNELSSLVEMGGVGTSNHHESARLQVEIADMEVFKDEKKRVENLRGVKLVNNDLGEIVVEGDESNPTEDIIAQYPIKVTADNSGEAGHRMTDPTDVGGIDTAPIFSQSQPDDFAAGFDDVNPNASFDLYEKVDVNHRLFVSRVAAAKTFFHRIEPSKKVSFHSNPAATAVSKATEKFHFPVTTKVSGRVSIFSKFKALIRDKFLMMRPSHSYQRLGSKETTVNELLQIVSLLLAPKQINGCPTEQELVKKKAKEVMKPGWGREGSNKLWLPLSKGKGISSMFLSGKWTFLTSALAISTPAECDH</sequence>
<feature type="chain" id="PRO_0000456301" description="NAC domain-containing protein 54">
    <location>
        <begin position="1"/>
        <end position="650"/>
    </location>
</feature>
<feature type="domain" description="NAC" evidence="1">
    <location>
        <begin position="6"/>
        <end position="156"/>
    </location>
</feature>
<feature type="DNA-binding region" evidence="1">
    <location>
        <begin position="105"/>
        <end position="162"/>
    </location>
</feature>
<evidence type="ECO:0000255" key="1">
    <source>
        <dbReference type="PROSITE-ProRule" id="PRU00353"/>
    </source>
</evidence>
<evidence type="ECO:0000269" key="2">
    <source>
    </source>
</evidence>
<evidence type="ECO:0000269" key="3">
    <source>
    </source>
</evidence>
<evidence type="ECO:0000269" key="4">
    <source>
    </source>
</evidence>
<evidence type="ECO:0000303" key="5">
    <source>
    </source>
</evidence>
<evidence type="ECO:0000303" key="6">
    <source>
    </source>
</evidence>
<evidence type="ECO:0000312" key="7">
    <source>
        <dbReference type="EMBL" id="AAO15294.1"/>
    </source>
</evidence>
<evidence type="ECO:0000312" key="8">
    <source>
        <dbReference type="EMBL" id="ABF93685.1"/>
    </source>
</evidence>
<evidence type="ECO:0000312" key="9">
    <source>
        <dbReference type="EMBL" id="BAS82017.1"/>
    </source>
</evidence>
<evidence type="ECO:0000312" key="10">
    <source>
        <dbReference type="EMBL" id="EAZ25383.1"/>
    </source>
</evidence>
<reference key="1">
    <citation type="journal article" date="2009" name="Plant J.">
        <title>Disruption of a novel gene for a NAC-domain protein in rice confers resistance to rice dwarf virus.</title>
        <authorList>
            <person name="Yoshii M."/>
            <person name="Shimizu T."/>
            <person name="Yamazaki M."/>
            <person name="Higashi T."/>
            <person name="Miyao A."/>
            <person name="Hirochika H."/>
            <person name="Omura T."/>
        </authorList>
    </citation>
    <scope>NUCLEOTIDE SEQUENCE [MRNA]</scope>
    <scope>TISSUE SPECIFICITY</scope>
    <scope>FUNCTION</scope>
    <scope>DISRUPTION PHENOTYPE</scope>
</reference>
<reference key="2">
    <citation type="journal article" date="2005" name="Genome Res.">
        <title>Sequence, annotation, and analysis of synteny between rice chromosome 3 and diverged grass species.</title>
        <authorList>
            <consortium name="The rice chromosome 3 sequencing consortium"/>
            <person name="Buell C.R."/>
            <person name="Yuan Q."/>
            <person name="Ouyang S."/>
            <person name="Liu J."/>
            <person name="Zhu W."/>
            <person name="Wang A."/>
            <person name="Maiti R."/>
            <person name="Haas B."/>
            <person name="Wortman J."/>
            <person name="Pertea M."/>
            <person name="Jones K.M."/>
            <person name="Kim M."/>
            <person name="Overton L."/>
            <person name="Tsitrin T."/>
            <person name="Fadrosh D."/>
            <person name="Bera J."/>
            <person name="Weaver B."/>
            <person name="Jin S."/>
            <person name="Johri S."/>
            <person name="Reardon M."/>
            <person name="Webb K."/>
            <person name="Hill J."/>
            <person name="Moffat K."/>
            <person name="Tallon L."/>
            <person name="Van Aken S."/>
            <person name="Lewis M."/>
            <person name="Utterback T."/>
            <person name="Feldblyum T."/>
            <person name="Zismann V."/>
            <person name="Iobst S."/>
            <person name="Hsiao J."/>
            <person name="de Vazeille A.R."/>
            <person name="Salzberg S.L."/>
            <person name="White O."/>
            <person name="Fraser C.M."/>
            <person name="Yu Y."/>
            <person name="Kim H."/>
            <person name="Rambo T."/>
            <person name="Currie J."/>
            <person name="Collura K."/>
            <person name="Kernodle-Thompson S."/>
            <person name="Wei F."/>
            <person name="Kudrna K."/>
            <person name="Ammiraju J.S.S."/>
            <person name="Luo M."/>
            <person name="Goicoechea J.L."/>
            <person name="Wing R.A."/>
            <person name="Henry D."/>
            <person name="Oates R."/>
            <person name="Palmer M."/>
            <person name="Pries G."/>
            <person name="Saski C."/>
            <person name="Simmons J."/>
            <person name="Soderlund C."/>
            <person name="Nelson W."/>
            <person name="de la Bastide M."/>
            <person name="Spiegel L."/>
            <person name="Nascimento L."/>
            <person name="Huang E."/>
            <person name="Preston R."/>
            <person name="Zutavern T."/>
            <person name="Palmer L."/>
            <person name="O'Shaughnessy A."/>
            <person name="Dike S."/>
            <person name="McCombie W.R."/>
            <person name="Minx P."/>
            <person name="Cordum H."/>
            <person name="Wilson R."/>
            <person name="Jin W."/>
            <person name="Lee H.R."/>
            <person name="Jiang J."/>
            <person name="Jackson S."/>
        </authorList>
    </citation>
    <scope>NUCLEOTIDE SEQUENCE [LARGE SCALE GENOMIC DNA]</scope>
    <source>
        <strain>cv. Nipponbare</strain>
    </source>
</reference>
<reference key="3">
    <citation type="journal article" date="2005" name="Nature">
        <title>The map-based sequence of the rice genome.</title>
        <authorList>
            <consortium name="International rice genome sequencing project (IRGSP)"/>
        </authorList>
    </citation>
    <scope>NUCLEOTIDE SEQUENCE [LARGE SCALE GENOMIC DNA]</scope>
    <source>
        <strain>cv. Nipponbare</strain>
    </source>
</reference>
<reference key="4">
    <citation type="journal article" date="2008" name="Nucleic Acids Res.">
        <title>The rice annotation project database (RAP-DB): 2008 update.</title>
        <authorList>
            <consortium name="The rice annotation project (RAP)"/>
        </authorList>
    </citation>
    <scope>GENOME REANNOTATION</scope>
    <source>
        <strain>cv. Nipponbare</strain>
    </source>
</reference>
<reference key="5">
    <citation type="journal article" date="2013" name="Rice">
        <title>Improvement of the Oryza sativa Nipponbare reference genome using next generation sequence and optical map data.</title>
        <authorList>
            <person name="Kawahara Y."/>
            <person name="de la Bastide M."/>
            <person name="Hamilton J.P."/>
            <person name="Kanamori H."/>
            <person name="McCombie W.R."/>
            <person name="Ouyang S."/>
            <person name="Schwartz D.C."/>
            <person name="Tanaka T."/>
            <person name="Wu J."/>
            <person name="Zhou S."/>
            <person name="Childs K.L."/>
            <person name="Davidson R.M."/>
            <person name="Lin H."/>
            <person name="Quesada-Ocampo L."/>
            <person name="Vaillancourt B."/>
            <person name="Sakai H."/>
            <person name="Lee S.S."/>
            <person name="Kim J."/>
            <person name="Numa H."/>
            <person name="Itoh T."/>
            <person name="Buell C.R."/>
            <person name="Matsumoto T."/>
        </authorList>
    </citation>
    <scope>GENOME REANNOTATION</scope>
    <source>
        <strain>cv. Nipponbare</strain>
    </source>
</reference>
<reference key="6">
    <citation type="journal article" date="2005" name="PLoS Biol.">
        <title>The genomes of Oryza sativa: a history of duplications.</title>
        <authorList>
            <person name="Yu J."/>
            <person name="Wang J."/>
            <person name="Lin W."/>
            <person name="Li S."/>
            <person name="Li H."/>
            <person name="Zhou J."/>
            <person name="Ni P."/>
            <person name="Dong W."/>
            <person name="Hu S."/>
            <person name="Zeng C."/>
            <person name="Zhang J."/>
            <person name="Zhang Y."/>
            <person name="Li R."/>
            <person name="Xu Z."/>
            <person name="Li S."/>
            <person name="Li X."/>
            <person name="Zheng H."/>
            <person name="Cong L."/>
            <person name="Lin L."/>
            <person name="Yin J."/>
            <person name="Geng J."/>
            <person name="Li G."/>
            <person name="Shi J."/>
            <person name="Liu J."/>
            <person name="Lv H."/>
            <person name="Li J."/>
            <person name="Wang J."/>
            <person name="Deng Y."/>
            <person name="Ran L."/>
            <person name="Shi X."/>
            <person name="Wang X."/>
            <person name="Wu Q."/>
            <person name="Li C."/>
            <person name="Ren X."/>
            <person name="Wang J."/>
            <person name="Wang X."/>
            <person name="Li D."/>
            <person name="Liu D."/>
            <person name="Zhang X."/>
            <person name="Ji Z."/>
            <person name="Zhao W."/>
            <person name="Sun Y."/>
            <person name="Zhang Z."/>
            <person name="Bao J."/>
            <person name="Han Y."/>
            <person name="Dong L."/>
            <person name="Ji J."/>
            <person name="Chen P."/>
            <person name="Wu S."/>
            <person name="Liu J."/>
            <person name="Xiao Y."/>
            <person name="Bu D."/>
            <person name="Tan J."/>
            <person name="Yang L."/>
            <person name="Ye C."/>
            <person name="Zhang J."/>
            <person name="Xu J."/>
            <person name="Zhou Y."/>
            <person name="Yu Y."/>
            <person name="Zhang B."/>
            <person name="Zhuang S."/>
            <person name="Wei H."/>
            <person name="Liu B."/>
            <person name="Lei M."/>
            <person name="Yu H."/>
            <person name="Li Y."/>
            <person name="Xu H."/>
            <person name="Wei S."/>
            <person name="He X."/>
            <person name="Fang L."/>
            <person name="Zhang Z."/>
            <person name="Zhang Y."/>
            <person name="Huang X."/>
            <person name="Su Z."/>
            <person name="Tong W."/>
            <person name="Li J."/>
            <person name="Tong Z."/>
            <person name="Li S."/>
            <person name="Ye J."/>
            <person name="Wang L."/>
            <person name="Fang L."/>
            <person name="Lei T."/>
            <person name="Chen C.-S."/>
            <person name="Chen H.-C."/>
            <person name="Xu Z."/>
            <person name="Li H."/>
            <person name="Huang H."/>
            <person name="Zhang F."/>
            <person name="Xu H."/>
            <person name="Li N."/>
            <person name="Zhao C."/>
            <person name="Li S."/>
            <person name="Dong L."/>
            <person name="Huang Y."/>
            <person name="Li L."/>
            <person name="Xi Y."/>
            <person name="Qi Q."/>
            <person name="Li W."/>
            <person name="Zhang B."/>
            <person name="Hu W."/>
            <person name="Zhang Y."/>
            <person name="Tian X."/>
            <person name="Jiao Y."/>
            <person name="Liang X."/>
            <person name="Jin J."/>
            <person name="Gao L."/>
            <person name="Zheng W."/>
            <person name="Hao B."/>
            <person name="Liu S.-M."/>
            <person name="Wang W."/>
            <person name="Yuan L."/>
            <person name="Cao M."/>
            <person name="McDermott J."/>
            <person name="Samudrala R."/>
            <person name="Wang J."/>
            <person name="Wong G.K.-S."/>
            <person name="Yang H."/>
        </authorList>
    </citation>
    <scope>NUCLEOTIDE SEQUENCE [LARGE SCALE GENOMIC DNA]</scope>
    <source>
        <strain>cv. Nipponbare</strain>
    </source>
</reference>
<reference key="7">
    <citation type="journal article" date="2008" name="Mol. Genet. Genomics">
        <title>Systematic sequence analysis and identification of tissue-specific or stress-responsive genes of NAC transcription factor family in rice.</title>
        <authorList>
            <person name="Fang Y."/>
            <person name="You J."/>
            <person name="Xie K."/>
            <person name="Xie W."/>
            <person name="Xiong L."/>
        </authorList>
    </citation>
    <scope>GENE FAMILY</scope>
    <scope>NOMENCLATURE</scope>
</reference>
<reference key="8">
    <citation type="journal article" date="2010" name="Plant J.">
        <title>The NAC transcription factor RIM1 of rice is a new regulator of jasmonate signaling.</title>
        <authorList>
            <person name="Yoshii M."/>
            <person name="Yamazaki M."/>
            <person name="Rakwal R."/>
            <person name="Kishi-Kaboshi M."/>
            <person name="Miyao A."/>
            <person name="Hirochika H."/>
        </authorList>
    </citation>
    <scope>FUNCTION</scope>
    <scope>DISRUPTION PHENOTYPE</scope>
</reference>
<reference key="9">
    <citation type="journal article" date="2020" name="Plant Cell">
        <title>Multilayered regulation of membrane-bound ONAC054 is essential for abscisic acid-induced leaf senescence in rice.</title>
        <authorList>
            <person name="Sakuraba Y."/>
            <person name="Kim D."/>
            <person name="Han S.H."/>
            <person name="Kim S.H."/>
            <person name="Piao W."/>
            <person name="Yanagisawa S."/>
            <person name="An G."/>
            <person name="Paek N.C."/>
        </authorList>
    </citation>
    <scope>FUNCTION</scope>
    <scope>SUBCELLULAR LOCATION</scope>
    <scope>DISRUPTION PHENOTYPE</scope>
</reference>
<protein>
    <recommendedName>
        <fullName evidence="5">NAC domain-containing protein 54</fullName>
        <shortName evidence="5">ONAC054</shortName>
    </recommendedName>
    <alternativeName>
        <fullName evidence="6">Protein RICE DWARF VIRUS MULTIPLICATION 1</fullName>
    </alternativeName>
</protein>
<gene>
    <name evidence="5" type="primary">NAC54</name>
    <name evidence="6" type="synonym">RIM1</name>
    <name evidence="9" type="ordered locus">Os03g0119966</name>
    <name evidence="8" type="ordered locus">LOC_Os03g02800</name>
    <name evidence="7" type="ORF">OJ1263H11.11</name>
    <name evidence="10" type="ORF">OsJ_09200</name>
</gene>
<keyword id="KW-0938">Abscisic acid signaling pathway</keyword>
<keyword id="KW-0238">DNA-binding</keyword>
<keyword id="KW-1184">Jasmonic acid signaling pathway</keyword>
<keyword id="KW-0539">Nucleus</keyword>
<keyword id="KW-1185">Reference proteome</keyword>
<keyword id="KW-0804">Transcription</keyword>
<keyword id="KW-0805">Transcription regulation</keyword>
<proteinExistence type="evidence at transcript level"/>
<organism>
    <name type="scientific">Oryza sativa subsp. japonica</name>
    <name type="common">Rice</name>
    <dbReference type="NCBI Taxonomy" id="39947"/>
    <lineage>
        <taxon>Eukaryota</taxon>
        <taxon>Viridiplantae</taxon>
        <taxon>Streptophyta</taxon>
        <taxon>Embryophyta</taxon>
        <taxon>Tracheophyta</taxon>
        <taxon>Spermatophyta</taxon>
        <taxon>Magnoliopsida</taxon>
        <taxon>Liliopsida</taxon>
        <taxon>Poales</taxon>
        <taxon>Poaceae</taxon>
        <taxon>BOP clade</taxon>
        <taxon>Oryzoideae</taxon>
        <taxon>Oryzeae</taxon>
        <taxon>Oryzinae</taxon>
        <taxon>Oryza</taxon>
        <taxon>Oryza sativa</taxon>
    </lineage>
</organism>